<comment type="function">
    <text evidence="1">Associates with the EF-Tu.GDP complex and induces the exchange of GDP to GTP. It remains bound to the aminoacyl-tRNA.EF-Tu.GTP complex up to the GTP hydrolysis stage on the ribosome.</text>
</comment>
<comment type="subcellular location">
    <subcellularLocation>
        <location evidence="1">Cytoplasm</location>
    </subcellularLocation>
</comment>
<comment type="similarity">
    <text evidence="1">Belongs to the EF-Ts family.</text>
</comment>
<evidence type="ECO:0000255" key="1">
    <source>
        <dbReference type="HAMAP-Rule" id="MF_00050"/>
    </source>
</evidence>
<sequence>MTAITASMVKELRDRTGLAMMECKKALTEANGDIELAIDNLRKSGQAKAAKKAGNIAADGAITIVQDGNKAILVEVNCQTDFVAKDENFSNFAHTVAAAALAAGETDAAKIAELKLADGQSVEEARIALVQKIGENIQVRRAKIVEGEQLAIYKHGLKIGVVVSYTGDADTGKGIAMHVAAFNPVAVNAEAVPADLIAKEKEIAEAKALESGKPANIVEKMVTGSVEKYLNEVALDRQMYVIDNEKKVADVLKATGTNVANFVRFEVGEGIEKKAELSFAEEVAAAQAAAK</sequence>
<feature type="chain" id="PRO_1000116678" description="Elongation factor Ts">
    <location>
        <begin position="1"/>
        <end position="291"/>
    </location>
</feature>
<feature type="region of interest" description="Involved in Mg(2+) ion dislocation from EF-Tu" evidence="1">
    <location>
        <begin position="80"/>
        <end position="83"/>
    </location>
</feature>
<reference key="1">
    <citation type="journal article" date="2008" name="PLoS ONE">
        <title>Comparative analysis of Acinetobacters: three genomes for three lifestyles.</title>
        <authorList>
            <person name="Vallenet D."/>
            <person name="Nordmann P."/>
            <person name="Barbe V."/>
            <person name="Poirel L."/>
            <person name="Mangenot S."/>
            <person name="Bataille E."/>
            <person name="Dossat C."/>
            <person name="Gas S."/>
            <person name="Kreimeyer A."/>
            <person name="Lenoble P."/>
            <person name="Oztas S."/>
            <person name="Poulain J."/>
            <person name="Segurens B."/>
            <person name="Robert C."/>
            <person name="Abergel C."/>
            <person name="Claverie J.-M."/>
            <person name="Raoult D."/>
            <person name="Medigue C."/>
            <person name="Weissenbach J."/>
            <person name="Cruveiller S."/>
        </authorList>
    </citation>
    <scope>NUCLEOTIDE SEQUENCE [LARGE SCALE GENOMIC DNA]</scope>
    <source>
        <strain>SDF</strain>
    </source>
</reference>
<name>EFTS_ACIBS</name>
<proteinExistence type="inferred from homology"/>
<gene>
    <name evidence="1" type="primary">tsf</name>
    <name type="ordered locus">ABSDF1203</name>
</gene>
<dbReference type="EMBL" id="CU468230">
    <property type="protein sequence ID" value="CAP00553.1"/>
    <property type="molecule type" value="Genomic_DNA"/>
</dbReference>
<dbReference type="SMR" id="B0VUW1"/>
<dbReference type="KEGG" id="abm:ABSDF1203"/>
<dbReference type="HOGENOM" id="CLU_047155_0_2_6"/>
<dbReference type="Proteomes" id="UP000001741">
    <property type="component" value="Chromosome"/>
</dbReference>
<dbReference type="GO" id="GO:0005737">
    <property type="term" value="C:cytoplasm"/>
    <property type="evidence" value="ECO:0007669"/>
    <property type="project" value="UniProtKB-SubCell"/>
</dbReference>
<dbReference type="GO" id="GO:0003746">
    <property type="term" value="F:translation elongation factor activity"/>
    <property type="evidence" value="ECO:0007669"/>
    <property type="project" value="UniProtKB-UniRule"/>
</dbReference>
<dbReference type="CDD" id="cd14275">
    <property type="entry name" value="UBA_EF-Ts"/>
    <property type="match status" value="1"/>
</dbReference>
<dbReference type="FunFam" id="1.10.286.20:FF:000001">
    <property type="entry name" value="Elongation factor Ts"/>
    <property type="match status" value="1"/>
</dbReference>
<dbReference type="FunFam" id="1.10.8.10:FF:000001">
    <property type="entry name" value="Elongation factor Ts"/>
    <property type="match status" value="1"/>
</dbReference>
<dbReference type="FunFam" id="3.30.479.20:FF:000001">
    <property type="entry name" value="Elongation factor Ts"/>
    <property type="match status" value="1"/>
</dbReference>
<dbReference type="Gene3D" id="1.10.286.20">
    <property type="match status" value="1"/>
</dbReference>
<dbReference type="Gene3D" id="1.10.8.10">
    <property type="entry name" value="DNA helicase RuvA subunit, C-terminal domain"/>
    <property type="match status" value="1"/>
</dbReference>
<dbReference type="Gene3D" id="3.30.479.20">
    <property type="entry name" value="Elongation factor Ts, dimerisation domain"/>
    <property type="match status" value="2"/>
</dbReference>
<dbReference type="HAMAP" id="MF_00050">
    <property type="entry name" value="EF_Ts"/>
    <property type="match status" value="1"/>
</dbReference>
<dbReference type="InterPro" id="IPR036402">
    <property type="entry name" value="EF-Ts_dimer_sf"/>
</dbReference>
<dbReference type="InterPro" id="IPR001816">
    <property type="entry name" value="Transl_elong_EFTs/EF1B"/>
</dbReference>
<dbReference type="InterPro" id="IPR014039">
    <property type="entry name" value="Transl_elong_EFTs/EF1B_dimer"/>
</dbReference>
<dbReference type="InterPro" id="IPR018101">
    <property type="entry name" value="Transl_elong_Ts_CS"/>
</dbReference>
<dbReference type="InterPro" id="IPR009060">
    <property type="entry name" value="UBA-like_sf"/>
</dbReference>
<dbReference type="NCBIfam" id="TIGR00116">
    <property type="entry name" value="tsf"/>
    <property type="match status" value="1"/>
</dbReference>
<dbReference type="PANTHER" id="PTHR11741">
    <property type="entry name" value="ELONGATION FACTOR TS"/>
    <property type="match status" value="1"/>
</dbReference>
<dbReference type="PANTHER" id="PTHR11741:SF0">
    <property type="entry name" value="ELONGATION FACTOR TS, MITOCHONDRIAL"/>
    <property type="match status" value="1"/>
</dbReference>
<dbReference type="Pfam" id="PF00889">
    <property type="entry name" value="EF_TS"/>
    <property type="match status" value="1"/>
</dbReference>
<dbReference type="SUPFAM" id="SSF54713">
    <property type="entry name" value="Elongation factor Ts (EF-Ts), dimerisation domain"/>
    <property type="match status" value="1"/>
</dbReference>
<dbReference type="SUPFAM" id="SSF46934">
    <property type="entry name" value="UBA-like"/>
    <property type="match status" value="1"/>
</dbReference>
<dbReference type="PROSITE" id="PS01126">
    <property type="entry name" value="EF_TS_1"/>
    <property type="match status" value="1"/>
</dbReference>
<dbReference type="PROSITE" id="PS01127">
    <property type="entry name" value="EF_TS_2"/>
    <property type="match status" value="1"/>
</dbReference>
<organism>
    <name type="scientific">Acinetobacter baumannii (strain SDF)</name>
    <dbReference type="NCBI Taxonomy" id="509170"/>
    <lineage>
        <taxon>Bacteria</taxon>
        <taxon>Pseudomonadati</taxon>
        <taxon>Pseudomonadota</taxon>
        <taxon>Gammaproteobacteria</taxon>
        <taxon>Moraxellales</taxon>
        <taxon>Moraxellaceae</taxon>
        <taxon>Acinetobacter</taxon>
        <taxon>Acinetobacter calcoaceticus/baumannii complex</taxon>
    </lineage>
</organism>
<accession>B0VUW1</accession>
<keyword id="KW-0963">Cytoplasm</keyword>
<keyword id="KW-0251">Elongation factor</keyword>
<keyword id="KW-0648">Protein biosynthesis</keyword>
<protein>
    <recommendedName>
        <fullName evidence="1">Elongation factor Ts</fullName>
        <shortName evidence="1">EF-Ts</shortName>
    </recommendedName>
</protein>